<feature type="chain" id="PRO_0000093103" description="UvrABC system protein A">
    <location>
        <begin position="1"/>
        <end position="942"/>
    </location>
</feature>
<feature type="domain" description="ABC transporter 1" evidence="1">
    <location>
        <begin position="308"/>
        <end position="589"/>
    </location>
</feature>
<feature type="domain" description="ABC transporter 2" evidence="1">
    <location>
        <begin position="609"/>
        <end position="937"/>
    </location>
</feature>
<feature type="zinc finger region" description="C4-type" evidence="1">
    <location>
        <begin position="251"/>
        <end position="278"/>
    </location>
</feature>
<feature type="zinc finger region" description="C4-type" evidence="1">
    <location>
        <begin position="740"/>
        <end position="766"/>
    </location>
</feature>
<feature type="binding site" evidence="1">
    <location>
        <begin position="32"/>
        <end position="39"/>
    </location>
    <ligand>
        <name>ATP</name>
        <dbReference type="ChEBI" id="CHEBI:30616"/>
    </ligand>
</feature>
<feature type="binding site" evidence="1">
    <location>
        <begin position="641"/>
        <end position="648"/>
    </location>
    <ligand>
        <name>ATP</name>
        <dbReference type="ChEBI" id="CHEBI:30616"/>
    </ligand>
</feature>
<organism>
    <name type="scientific">Streptococcus pyogenes serotype M3 (strain ATCC BAA-595 / MGAS315)</name>
    <dbReference type="NCBI Taxonomy" id="198466"/>
    <lineage>
        <taxon>Bacteria</taxon>
        <taxon>Bacillati</taxon>
        <taxon>Bacillota</taxon>
        <taxon>Bacilli</taxon>
        <taxon>Lactobacillales</taxon>
        <taxon>Streptococcaceae</taxon>
        <taxon>Streptococcus</taxon>
    </lineage>
</organism>
<sequence>MQNKIIIHGARAHNLKNIDVEIPRDKLVVVTGLSGSGKSSLAFDTIYAEGQRRYVESLSAYARQFLGNMEKPDVDSIDGLSPAISIDQKTTSKNPRSTVGTVTEINDYLRLLYARVGTPYCINGHGAITASSAEQIVEQVLALPERTRMQILAPIVRRKKGQHKTIFEKIQKDGYVRVRVDGDIFDVTEVPELSKSKMHNIEVVIDRLVNKDGIRSRLFDSVEAALRLGDGYLMIDTMDGNELLFSEHYSCPVCGFTVPELEPRLFSFNAPFGSCPTCDGLGIKLEVDLDLVVPDPSKSLKEGALAPWNPISSNYYPTMLEQAMASFGVDMDTPFEALTEEERDLVLYGSGDREFHFHYVNDFGGERNIDIPFEGVVTNVNRRYHETNSDYTRNVMRGYMNELTCATCHGYRLNDQALCVHVGGEEGPHIGQISELSIADHLQLLEELELTENESTIAKPIVKEIHDRLTFLNNVGLNYLTLSRAAGTLSGGESQRIRLATQIGSNLSGVLYILDEPSIGLHQRDNDRLIESLKKMRDLGNTLIVVEHDEDTMMQADWLIDVGPGAGEFGGEIIASGTPKQVAKNKKSITGQYLSGKKFIPVPLERRSGNGRFIEIKGAAQNNLQSLDVRFPLGKFIAVTGVSGSGKSTLVNSILKKAVAQKLNRNADKPGKYHSISGIEHIERLIDIDQSPIGRTPRSNPATYTGVFDDIRDLFAQTNEAKIRGYKKGRFSFNVKGGRCEACSGDGIIKIEMHFLPDVYVPCEVCHGRRYNSETLEVHYKEKNIAEVLDMTVDDALVFFSAIPKIARKIQTIKDVGLGYVTLGQPATTLSGGEAQRMKLASELHKRSTGKSLYILDEPTTGLHTDDIARLLKVLERFVDDGNTVLVIEHNLDVIKSADHIIDLGPEGGVGGGQIVATGTPEEVAQVKESYTGHYLKVKLQQ</sequence>
<proteinExistence type="inferred from homology"/>
<comment type="function">
    <text evidence="1">The UvrABC repair system catalyzes the recognition and processing of DNA lesions. UvrA is an ATPase and a DNA-binding protein. A damage recognition complex composed of 2 UvrA and 2 UvrB subunits scans DNA for abnormalities. When the presence of a lesion has been verified by UvrB, the UvrA molecules dissociate.</text>
</comment>
<comment type="subunit">
    <text evidence="1">Forms a heterotetramer with UvrB during the search for lesions.</text>
</comment>
<comment type="subcellular location">
    <subcellularLocation>
        <location evidence="1">Cytoplasm</location>
    </subcellularLocation>
</comment>
<comment type="similarity">
    <text evidence="1">Belongs to the ABC transporter superfamily. UvrA family.</text>
</comment>
<accession>P0CZ40</accession>
<accession>Q8K5Z0</accession>
<protein>
    <recommendedName>
        <fullName evidence="1">UvrABC system protein A</fullName>
        <shortName evidence="1">UvrA protein</shortName>
    </recommendedName>
    <alternativeName>
        <fullName evidence="1">Excinuclease ABC subunit A</fullName>
    </alternativeName>
</protein>
<evidence type="ECO:0000255" key="1">
    <source>
        <dbReference type="HAMAP-Rule" id="MF_00205"/>
    </source>
</evidence>
<dbReference type="EMBL" id="AE014074">
    <property type="protein sequence ID" value="AAM80184.1"/>
    <property type="molecule type" value="Genomic_DNA"/>
</dbReference>
<dbReference type="RefSeq" id="WP_011054967.1">
    <property type="nucleotide sequence ID" value="NC_004070.1"/>
</dbReference>
<dbReference type="SMR" id="P0CZ40"/>
<dbReference type="KEGG" id="spg:SpyM3_1577"/>
<dbReference type="HOGENOM" id="CLU_001370_2_1_9"/>
<dbReference type="Proteomes" id="UP000000564">
    <property type="component" value="Chromosome"/>
</dbReference>
<dbReference type="GO" id="GO:0005737">
    <property type="term" value="C:cytoplasm"/>
    <property type="evidence" value="ECO:0007669"/>
    <property type="project" value="UniProtKB-SubCell"/>
</dbReference>
<dbReference type="GO" id="GO:0009380">
    <property type="term" value="C:excinuclease repair complex"/>
    <property type="evidence" value="ECO:0007669"/>
    <property type="project" value="InterPro"/>
</dbReference>
<dbReference type="GO" id="GO:0005524">
    <property type="term" value="F:ATP binding"/>
    <property type="evidence" value="ECO:0007669"/>
    <property type="project" value="UniProtKB-UniRule"/>
</dbReference>
<dbReference type="GO" id="GO:0016887">
    <property type="term" value="F:ATP hydrolysis activity"/>
    <property type="evidence" value="ECO:0007669"/>
    <property type="project" value="InterPro"/>
</dbReference>
<dbReference type="GO" id="GO:0003677">
    <property type="term" value="F:DNA binding"/>
    <property type="evidence" value="ECO:0007669"/>
    <property type="project" value="UniProtKB-UniRule"/>
</dbReference>
<dbReference type="GO" id="GO:0009381">
    <property type="term" value="F:excinuclease ABC activity"/>
    <property type="evidence" value="ECO:0007669"/>
    <property type="project" value="UniProtKB-UniRule"/>
</dbReference>
<dbReference type="GO" id="GO:0008270">
    <property type="term" value="F:zinc ion binding"/>
    <property type="evidence" value="ECO:0007669"/>
    <property type="project" value="UniProtKB-UniRule"/>
</dbReference>
<dbReference type="GO" id="GO:0006289">
    <property type="term" value="P:nucleotide-excision repair"/>
    <property type="evidence" value="ECO:0007669"/>
    <property type="project" value="UniProtKB-UniRule"/>
</dbReference>
<dbReference type="GO" id="GO:0009432">
    <property type="term" value="P:SOS response"/>
    <property type="evidence" value="ECO:0007669"/>
    <property type="project" value="UniProtKB-UniRule"/>
</dbReference>
<dbReference type="CDD" id="cd03270">
    <property type="entry name" value="ABC_UvrA_I"/>
    <property type="match status" value="1"/>
</dbReference>
<dbReference type="CDD" id="cd03271">
    <property type="entry name" value="ABC_UvrA_II"/>
    <property type="match status" value="1"/>
</dbReference>
<dbReference type="FunFam" id="1.20.1580.10:FF:000002">
    <property type="entry name" value="UvrABC system protein A"/>
    <property type="match status" value="1"/>
</dbReference>
<dbReference type="FunFam" id="3.40.50.300:FF:000028">
    <property type="entry name" value="UvrABC system protein A"/>
    <property type="match status" value="1"/>
</dbReference>
<dbReference type="Gene3D" id="3.30.190.20">
    <property type="match status" value="1"/>
</dbReference>
<dbReference type="Gene3D" id="1.10.8.280">
    <property type="entry name" value="ABC transporter ATPase domain-like"/>
    <property type="match status" value="1"/>
</dbReference>
<dbReference type="Gene3D" id="1.20.1580.10">
    <property type="entry name" value="ABC transporter ATPase like domain"/>
    <property type="match status" value="3"/>
</dbReference>
<dbReference type="Gene3D" id="3.40.50.300">
    <property type="entry name" value="P-loop containing nucleotide triphosphate hydrolases"/>
    <property type="match status" value="3"/>
</dbReference>
<dbReference type="HAMAP" id="MF_00205">
    <property type="entry name" value="UvrA"/>
    <property type="match status" value="1"/>
</dbReference>
<dbReference type="InterPro" id="IPR003593">
    <property type="entry name" value="AAA+_ATPase"/>
</dbReference>
<dbReference type="InterPro" id="IPR003439">
    <property type="entry name" value="ABC_transporter-like_ATP-bd"/>
</dbReference>
<dbReference type="InterPro" id="IPR017871">
    <property type="entry name" value="ABC_transporter-like_CS"/>
</dbReference>
<dbReference type="InterPro" id="IPR027417">
    <property type="entry name" value="P-loop_NTPase"/>
</dbReference>
<dbReference type="InterPro" id="IPR004602">
    <property type="entry name" value="UvrA"/>
</dbReference>
<dbReference type="InterPro" id="IPR041552">
    <property type="entry name" value="UvrA_DNA-bd"/>
</dbReference>
<dbReference type="InterPro" id="IPR041102">
    <property type="entry name" value="UvrA_inter"/>
</dbReference>
<dbReference type="NCBIfam" id="NF001503">
    <property type="entry name" value="PRK00349.1"/>
    <property type="match status" value="1"/>
</dbReference>
<dbReference type="NCBIfam" id="TIGR00630">
    <property type="entry name" value="uvra"/>
    <property type="match status" value="1"/>
</dbReference>
<dbReference type="PANTHER" id="PTHR43152">
    <property type="entry name" value="UVRABC SYSTEM PROTEIN A"/>
    <property type="match status" value="1"/>
</dbReference>
<dbReference type="PANTHER" id="PTHR43152:SF3">
    <property type="entry name" value="UVRABC SYSTEM PROTEIN A"/>
    <property type="match status" value="1"/>
</dbReference>
<dbReference type="Pfam" id="PF17755">
    <property type="entry name" value="UvrA_DNA-bind"/>
    <property type="match status" value="1"/>
</dbReference>
<dbReference type="Pfam" id="PF17760">
    <property type="entry name" value="UvrA_inter"/>
    <property type="match status" value="1"/>
</dbReference>
<dbReference type="SMART" id="SM00382">
    <property type="entry name" value="AAA"/>
    <property type="match status" value="1"/>
</dbReference>
<dbReference type="SUPFAM" id="SSF52540">
    <property type="entry name" value="P-loop containing nucleoside triphosphate hydrolases"/>
    <property type="match status" value="2"/>
</dbReference>
<dbReference type="PROSITE" id="PS00211">
    <property type="entry name" value="ABC_TRANSPORTER_1"/>
    <property type="match status" value="2"/>
</dbReference>
<dbReference type="PROSITE" id="PS50893">
    <property type="entry name" value="ABC_TRANSPORTER_2"/>
    <property type="match status" value="2"/>
</dbReference>
<gene>
    <name evidence="1" type="primary">uvrA</name>
    <name type="ordered locus">SpyM3_1577</name>
</gene>
<reference key="1">
    <citation type="journal article" date="2002" name="Proc. Natl. Acad. Sci. U.S.A.">
        <title>Genome sequence of a serotype M3 strain of group A Streptococcus: phage-encoded toxins, the high-virulence phenotype, and clone emergence.</title>
        <authorList>
            <person name="Beres S.B."/>
            <person name="Sylva G.L."/>
            <person name="Barbian K.D."/>
            <person name="Lei B."/>
            <person name="Hoff J.S."/>
            <person name="Mammarella N.D."/>
            <person name="Liu M.-Y."/>
            <person name="Smoot J.C."/>
            <person name="Porcella S.F."/>
            <person name="Parkins L.D."/>
            <person name="Campbell D.S."/>
            <person name="Smith T.M."/>
            <person name="McCormick J.K."/>
            <person name="Leung D.Y.M."/>
            <person name="Schlievert P.M."/>
            <person name="Musser J.M."/>
        </authorList>
    </citation>
    <scope>NUCLEOTIDE SEQUENCE [LARGE SCALE GENOMIC DNA]</scope>
    <source>
        <strain>ATCC BAA-595 / MGAS315</strain>
    </source>
</reference>
<keyword id="KW-0067">ATP-binding</keyword>
<keyword id="KW-0963">Cytoplasm</keyword>
<keyword id="KW-0227">DNA damage</keyword>
<keyword id="KW-0228">DNA excision</keyword>
<keyword id="KW-0234">DNA repair</keyword>
<keyword id="KW-0238">DNA-binding</keyword>
<keyword id="KW-0267">Excision nuclease</keyword>
<keyword id="KW-0479">Metal-binding</keyword>
<keyword id="KW-0547">Nucleotide-binding</keyword>
<keyword id="KW-0677">Repeat</keyword>
<keyword id="KW-0742">SOS response</keyword>
<keyword id="KW-0862">Zinc</keyword>
<keyword id="KW-0863">Zinc-finger</keyword>
<name>UVRA_STRP3</name>